<organism>
    <name type="scientific">Buchnera aphidicola subsp. Baizongia pistaciae (strain Bp)</name>
    <dbReference type="NCBI Taxonomy" id="224915"/>
    <lineage>
        <taxon>Bacteria</taxon>
        <taxon>Pseudomonadati</taxon>
        <taxon>Pseudomonadota</taxon>
        <taxon>Gammaproteobacteria</taxon>
        <taxon>Enterobacterales</taxon>
        <taxon>Erwiniaceae</taxon>
        <taxon>Buchnera</taxon>
    </lineage>
</organism>
<protein>
    <recommendedName>
        <fullName evidence="1">UDP-N-acetylglucosamine--N-acetylmuramyl-(pentapeptide) pyrophosphoryl-undecaprenol N-acetylglucosamine transferase</fullName>
        <ecNumber evidence="1">2.4.1.227</ecNumber>
    </recommendedName>
    <alternativeName>
        <fullName evidence="1">Undecaprenyl-PP-MurNAc-pentapeptide-UDPGlcNAc GlcNAc transferase</fullName>
    </alternativeName>
</protein>
<reference key="1">
    <citation type="journal article" date="2003" name="Proc. Natl. Acad. Sci. U.S.A.">
        <title>Reductive genome evolution in Buchnera aphidicola.</title>
        <authorList>
            <person name="van Ham R.C.H.J."/>
            <person name="Kamerbeek J."/>
            <person name="Palacios C."/>
            <person name="Rausell C."/>
            <person name="Abascal F."/>
            <person name="Bastolla U."/>
            <person name="Fernandez J.M."/>
            <person name="Jimenez L."/>
            <person name="Postigo M."/>
            <person name="Silva F.J."/>
            <person name="Tamames J."/>
            <person name="Viguera E."/>
            <person name="Latorre A."/>
            <person name="Valencia A."/>
            <person name="Moran F."/>
            <person name="Moya A."/>
        </authorList>
    </citation>
    <scope>NUCLEOTIDE SEQUENCE [LARGE SCALE GENOMIC DNA]</scope>
    <source>
        <strain>Bp</strain>
    </source>
</reference>
<feature type="chain" id="PRO_0000109155" description="UDP-N-acetylglucosamine--N-acetylmuramyl-(pentapeptide) pyrophosphoryl-undecaprenol N-acetylglucosamine transferase">
    <location>
        <begin position="1"/>
        <end position="353"/>
    </location>
</feature>
<feature type="binding site" evidence="1">
    <location>
        <position position="123"/>
    </location>
    <ligand>
        <name>UDP-N-acetyl-alpha-D-glucosamine</name>
        <dbReference type="ChEBI" id="CHEBI:57705"/>
    </ligand>
</feature>
<feature type="binding site" evidence="1">
    <location>
        <position position="161"/>
    </location>
    <ligand>
        <name>UDP-N-acetyl-alpha-D-glucosamine</name>
        <dbReference type="ChEBI" id="CHEBI:57705"/>
    </ligand>
</feature>
<feature type="binding site" evidence="1">
    <location>
        <position position="189"/>
    </location>
    <ligand>
        <name>UDP-N-acetyl-alpha-D-glucosamine</name>
        <dbReference type="ChEBI" id="CHEBI:57705"/>
    </ligand>
</feature>
<feature type="binding site" evidence="1">
    <location>
        <position position="243"/>
    </location>
    <ligand>
        <name>UDP-N-acetyl-alpha-D-glucosamine</name>
        <dbReference type="ChEBI" id="CHEBI:57705"/>
    </ligand>
</feature>
<feature type="binding site" evidence="1">
    <location>
        <begin position="262"/>
        <end position="267"/>
    </location>
    <ligand>
        <name>UDP-N-acetyl-alpha-D-glucosamine</name>
        <dbReference type="ChEBI" id="CHEBI:57705"/>
    </ligand>
</feature>
<feature type="binding site" evidence="1">
    <location>
        <position position="287"/>
    </location>
    <ligand>
        <name>UDP-N-acetyl-alpha-D-glucosamine</name>
        <dbReference type="ChEBI" id="CHEBI:57705"/>
    </ligand>
</feature>
<accession>P59424</accession>
<name>MURG_BUCBP</name>
<dbReference type="EC" id="2.4.1.227" evidence="1"/>
<dbReference type="EMBL" id="AE016826">
    <property type="protein sequence ID" value="AAO26930.1"/>
    <property type="molecule type" value="Genomic_DNA"/>
</dbReference>
<dbReference type="RefSeq" id="WP_011091331.1">
    <property type="nucleotide sequence ID" value="NC_004545.1"/>
</dbReference>
<dbReference type="SMR" id="P59424"/>
<dbReference type="STRING" id="224915.bbp_198"/>
<dbReference type="CAZy" id="GT28">
    <property type="family name" value="Glycosyltransferase Family 28"/>
</dbReference>
<dbReference type="KEGG" id="bab:bbp_198"/>
<dbReference type="eggNOG" id="COG0707">
    <property type="taxonomic scope" value="Bacteria"/>
</dbReference>
<dbReference type="HOGENOM" id="CLU_037404_2_0_6"/>
<dbReference type="OrthoDB" id="9808936at2"/>
<dbReference type="UniPathway" id="UPA00219"/>
<dbReference type="Proteomes" id="UP000000601">
    <property type="component" value="Chromosome"/>
</dbReference>
<dbReference type="GO" id="GO:0005886">
    <property type="term" value="C:plasma membrane"/>
    <property type="evidence" value="ECO:0007669"/>
    <property type="project" value="UniProtKB-SubCell"/>
</dbReference>
<dbReference type="GO" id="GO:0051991">
    <property type="term" value="F:UDP-N-acetyl-D-glucosamine:N-acetylmuramoyl-L-alanyl-D-glutamyl-meso-2,6-diaminopimelyl-D-alanyl-D-alanine-diphosphoundecaprenol 4-beta-N-acetylglucosaminlytransferase activity"/>
    <property type="evidence" value="ECO:0007669"/>
    <property type="project" value="RHEA"/>
</dbReference>
<dbReference type="GO" id="GO:0050511">
    <property type="term" value="F:undecaprenyldiphospho-muramoylpentapeptide beta-N-acetylglucosaminyltransferase activity"/>
    <property type="evidence" value="ECO:0007669"/>
    <property type="project" value="UniProtKB-UniRule"/>
</dbReference>
<dbReference type="GO" id="GO:0005975">
    <property type="term" value="P:carbohydrate metabolic process"/>
    <property type="evidence" value="ECO:0007669"/>
    <property type="project" value="InterPro"/>
</dbReference>
<dbReference type="GO" id="GO:0051301">
    <property type="term" value="P:cell division"/>
    <property type="evidence" value="ECO:0007669"/>
    <property type="project" value="UniProtKB-KW"/>
</dbReference>
<dbReference type="GO" id="GO:0071555">
    <property type="term" value="P:cell wall organization"/>
    <property type="evidence" value="ECO:0007669"/>
    <property type="project" value="UniProtKB-KW"/>
</dbReference>
<dbReference type="GO" id="GO:0030259">
    <property type="term" value="P:lipid glycosylation"/>
    <property type="evidence" value="ECO:0007669"/>
    <property type="project" value="UniProtKB-UniRule"/>
</dbReference>
<dbReference type="GO" id="GO:0009252">
    <property type="term" value="P:peptidoglycan biosynthetic process"/>
    <property type="evidence" value="ECO:0007669"/>
    <property type="project" value="UniProtKB-UniRule"/>
</dbReference>
<dbReference type="GO" id="GO:0008360">
    <property type="term" value="P:regulation of cell shape"/>
    <property type="evidence" value="ECO:0007669"/>
    <property type="project" value="UniProtKB-KW"/>
</dbReference>
<dbReference type="CDD" id="cd03785">
    <property type="entry name" value="GT28_MurG"/>
    <property type="match status" value="1"/>
</dbReference>
<dbReference type="Gene3D" id="3.40.50.2000">
    <property type="entry name" value="Glycogen Phosphorylase B"/>
    <property type="match status" value="2"/>
</dbReference>
<dbReference type="HAMAP" id="MF_00033">
    <property type="entry name" value="MurG"/>
    <property type="match status" value="1"/>
</dbReference>
<dbReference type="InterPro" id="IPR006009">
    <property type="entry name" value="GlcNAc_MurG"/>
</dbReference>
<dbReference type="InterPro" id="IPR007235">
    <property type="entry name" value="Glyco_trans_28_C"/>
</dbReference>
<dbReference type="InterPro" id="IPR004276">
    <property type="entry name" value="GlycoTrans_28_N"/>
</dbReference>
<dbReference type="NCBIfam" id="TIGR01133">
    <property type="entry name" value="murG"/>
    <property type="match status" value="1"/>
</dbReference>
<dbReference type="PANTHER" id="PTHR21015:SF22">
    <property type="entry name" value="GLYCOSYLTRANSFERASE"/>
    <property type="match status" value="1"/>
</dbReference>
<dbReference type="PANTHER" id="PTHR21015">
    <property type="entry name" value="UDP-N-ACETYLGLUCOSAMINE--N-ACETYLMURAMYL-(PENTAPEPTIDE) PYROPHOSPHORYL-UNDECAPRENOL N-ACETYLGLUCOSAMINE TRANSFERASE 1"/>
    <property type="match status" value="1"/>
</dbReference>
<dbReference type="Pfam" id="PF04101">
    <property type="entry name" value="Glyco_tran_28_C"/>
    <property type="match status" value="1"/>
</dbReference>
<dbReference type="Pfam" id="PF03033">
    <property type="entry name" value="Glyco_transf_28"/>
    <property type="match status" value="1"/>
</dbReference>
<dbReference type="SUPFAM" id="SSF53756">
    <property type="entry name" value="UDP-Glycosyltransferase/glycogen phosphorylase"/>
    <property type="match status" value="1"/>
</dbReference>
<proteinExistence type="inferred from homology"/>
<comment type="function">
    <text evidence="1">Cell wall formation. Catalyzes the transfer of a GlcNAc subunit on undecaprenyl-pyrophosphoryl-MurNAc-pentapeptide (lipid intermediate I) to form undecaprenyl-pyrophosphoryl-MurNAc-(pentapeptide)GlcNAc (lipid intermediate II).</text>
</comment>
<comment type="catalytic activity">
    <reaction evidence="1">
        <text>di-trans,octa-cis-undecaprenyl diphospho-N-acetyl-alpha-D-muramoyl-L-alanyl-D-glutamyl-meso-2,6-diaminopimeloyl-D-alanyl-D-alanine + UDP-N-acetyl-alpha-D-glucosamine = di-trans,octa-cis-undecaprenyl diphospho-[N-acetyl-alpha-D-glucosaminyl-(1-&gt;4)]-N-acetyl-alpha-D-muramoyl-L-alanyl-D-glutamyl-meso-2,6-diaminopimeloyl-D-alanyl-D-alanine + UDP + H(+)</text>
        <dbReference type="Rhea" id="RHEA:31227"/>
        <dbReference type="ChEBI" id="CHEBI:15378"/>
        <dbReference type="ChEBI" id="CHEBI:57705"/>
        <dbReference type="ChEBI" id="CHEBI:58223"/>
        <dbReference type="ChEBI" id="CHEBI:61387"/>
        <dbReference type="ChEBI" id="CHEBI:61388"/>
        <dbReference type="EC" id="2.4.1.227"/>
    </reaction>
</comment>
<comment type="pathway">
    <text evidence="1">Cell wall biogenesis; peptidoglycan biosynthesis.</text>
</comment>
<comment type="subcellular location">
    <subcellularLocation>
        <location evidence="1">Cell membrane</location>
        <topology evidence="1">Peripheral membrane protein</topology>
        <orientation evidence="1">Cytoplasmic side</orientation>
    </subcellularLocation>
</comment>
<comment type="similarity">
    <text evidence="1">Belongs to the glycosyltransferase 28 family. MurG subfamily.</text>
</comment>
<keyword id="KW-0131">Cell cycle</keyword>
<keyword id="KW-0132">Cell division</keyword>
<keyword id="KW-1003">Cell membrane</keyword>
<keyword id="KW-0133">Cell shape</keyword>
<keyword id="KW-0961">Cell wall biogenesis/degradation</keyword>
<keyword id="KW-0328">Glycosyltransferase</keyword>
<keyword id="KW-0472">Membrane</keyword>
<keyword id="KW-0573">Peptidoglycan synthesis</keyword>
<keyword id="KW-1185">Reference proteome</keyword>
<keyword id="KW-0808">Transferase</keyword>
<sequence length="353" mass="39893">MKKIIIMAGGTCGHIFPGLEIAKSLINKGWKVFWLGTSKNIESKIVPKYGITIKYINISGVRGKNLFELMAIPFKLIIACYQAKKIIENINPDIILGMGGYVSVPGGIISYLYKKPLIIHEQNKIAGLANKLLSKFTTINMQAFANTILTSKSITVGNPLRTSITNLKKSWDRFENRSGPLRILVVGGSQGTQIFNFCFPKVALVLKNKIKLWHQIGKKNINIIHKLYDIHNNLAIYKITPFIKNISKAYFWADLIICRAGALTVSEIQYIGLPAIFVPFPHKDQHQYWNAYPLKMIGGAKIIMQERFNVNVIITLLKNLNRQKLIVMAKKLRSSYKLNSIKTITKIIENITH</sequence>
<evidence type="ECO:0000255" key="1">
    <source>
        <dbReference type="HAMAP-Rule" id="MF_00033"/>
    </source>
</evidence>
<gene>
    <name evidence="1" type="primary">murG</name>
    <name type="ordered locus">bbp_198</name>
</gene>